<proteinExistence type="inferred from homology"/>
<dbReference type="EC" id="6.1.1.6"/>
<dbReference type="EMBL" id="ABGB01000002">
    <property type="protein sequence ID" value="EDQ31218.1"/>
    <property type="molecule type" value="Genomic_DNA"/>
</dbReference>
<dbReference type="RefSeq" id="XP_001828066.1">
    <property type="nucleotide sequence ID" value="XM_001828014.1"/>
</dbReference>
<dbReference type="SMR" id="A9CS74"/>
<dbReference type="FunCoup" id="A9CS74">
    <property type="interactions" value="390"/>
</dbReference>
<dbReference type="STRING" id="481877.A9CS74"/>
<dbReference type="VEuPathDB" id="MicrosporidiaDB:EBI_25548"/>
<dbReference type="HOGENOM" id="CLU_008255_6_0_1"/>
<dbReference type="InParanoid" id="A9CS74"/>
<dbReference type="OMA" id="WIPGEPR"/>
<dbReference type="OrthoDB" id="21243at2759"/>
<dbReference type="GO" id="GO:0005829">
    <property type="term" value="C:cytosol"/>
    <property type="evidence" value="ECO:0007669"/>
    <property type="project" value="TreeGrafter"/>
</dbReference>
<dbReference type="GO" id="GO:0005524">
    <property type="term" value="F:ATP binding"/>
    <property type="evidence" value="ECO:0007669"/>
    <property type="project" value="UniProtKB-KW"/>
</dbReference>
<dbReference type="GO" id="GO:0004824">
    <property type="term" value="F:lysine-tRNA ligase activity"/>
    <property type="evidence" value="ECO:0007669"/>
    <property type="project" value="UniProtKB-EC"/>
</dbReference>
<dbReference type="GO" id="GO:0000049">
    <property type="term" value="F:tRNA binding"/>
    <property type="evidence" value="ECO:0007669"/>
    <property type="project" value="TreeGrafter"/>
</dbReference>
<dbReference type="GO" id="GO:0006430">
    <property type="term" value="P:lysyl-tRNA aminoacylation"/>
    <property type="evidence" value="ECO:0007669"/>
    <property type="project" value="InterPro"/>
</dbReference>
<dbReference type="CDD" id="cd00775">
    <property type="entry name" value="LysRS_core"/>
    <property type="match status" value="1"/>
</dbReference>
<dbReference type="CDD" id="cd04322">
    <property type="entry name" value="LysRS_N"/>
    <property type="match status" value="1"/>
</dbReference>
<dbReference type="FunFam" id="3.30.930.10:FF:000238">
    <property type="entry name" value="Lysine--tRNA ligase"/>
    <property type="match status" value="1"/>
</dbReference>
<dbReference type="Gene3D" id="3.30.930.10">
    <property type="entry name" value="Bira Bifunctional Protein, Domain 2"/>
    <property type="match status" value="1"/>
</dbReference>
<dbReference type="Gene3D" id="2.40.50.140">
    <property type="entry name" value="Nucleic acid-binding proteins"/>
    <property type="match status" value="1"/>
</dbReference>
<dbReference type="HAMAP" id="MF_00252">
    <property type="entry name" value="Lys_tRNA_synth_class2"/>
    <property type="match status" value="1"/>
</dbReference>
<dbReference type="InterPro" id="IPR004364">
    <property type="entry name" value="Aa-tRNA-synt_II"/>
</dbReference>
<dbReference type="InterPro" id="IPR006195">
    <property type="entry name" value="aa-tRNA-synth_II"/>
</dbReference>
<dbReference type="InterPro" id="IPR045864">
    <property type="entry name" value="aa-tRNA-synth_II/BPL/LPL"/>
</dbReference>
<dbReference type="InterPro" id="IPR002313">
    <property type="entry name" value="Lys-tRNA-ligase_II"/>
</dbReference>
<dbReference type="InterPro" id="IPR034762">
    <property type="entry name" value="Lys-tRNA-ligase_II_bac/euk"/>
</dbReference>
<dbReference type="InterPro" id="IPR044136">
    <property type="entry name" value="Lys-tRNA-ligase_II_N"/>
</dbReference>
<dbReference type="InterPro" id="IPR018149">
    <property type="entry name" value="Lys-tRNA-synth_II_C"/>
</dbReference>
<dbReference type="InterPro" id="IPR012340">
    <property type="entry name" value="NA-bd_OB-fold"/>
</dbReference>
<dbReference type="InterPro" id="IPR004365">
    <property type="entry name" value="NA-bd_OB_tRNA"/>
</dbReference>
<dbReference type="NCBIfam" id="TIGR00499">
    <property type="entry name" value="lysS_bact"/>
    <property type="match status" value="1"/>
</dbReference>
<dbReference type="NCBIfam" id="NF001756">
    <property type="entry name" value="PRK00484.1"/>
    <property type="match status" value="1"/>
</dbReference>
<dbReference type="PANTHER" id="PTHR42918:SF9">
    <property type="entry name" value="LYSINE--TRNA LIGASE"/>
    <property type="match status" value="1"/>
</dbReference>
<dbReference type="PANTHER" id="PTHR42918">
    <property type="entry name" value="LYSYL-TRNA SYNTHETASE"/>
    <property type="match status" value="1"/>
</dbReference>
<dbReference type="Pfam" id="PF00152">
    <property type="entry name" value="tRNA-synt_2"/>
    <property type="match status" value="1"/>
</dbReference>
<dbReference type="Pfam" id="PF01336">
    <property type="entry name" value="tRNA_anti-codon"/>
    <property type="match status" value="1"/>
</dbReference>
<dbReference type="PIRSF" id="PIRSF039101">
    <property type="entry name" value="LysRS2"/>
    <property type="match status" value="1"/>
</dbReference>
<dbReference type="PRINTS" id="PR00982">
    <property type="entry name" value="TRNASYNTHLYS"/>
</dbReference>
<dbReference type="SUPFAM" id="SSF55681">
    <property type="entry name" value="Class II aaRS and biotin synthetases"/>
    <property type="match status" value="1"/>
</dbReference>
<dbReference type="SUPFAM" id="SSF50249">
    <property type="entry name" value="Nucleic acid-binding proteins"/>
    <property type="match status" value="1"/>
</dbReference>
<dbReference type="PROSITE" id="PS50862">
    <property type="entry name" value="AA_TRNA_LIGASE_II"/>
    <property type="match status" value="1"/>
</dbReference>
<name>SYKC_ENTBH</name>
<gene>
    <name type="ORF">EBI_25548</name>
</gene>
<evidence type="ECO:0000250" key="1"/>
<evidence type="ECO:0000305" key="2"/>
<feature type="chain" id="PRO_0000388395" description="Probable lysine--tRNA ligase, cytoplasmic">
    <location>
        <begin position="1"/>
        <end position="518"/>
    </location>
</feature>
<sequence>MSKSHNDKEESPDNYYFQRREQMQELQSLGINVYPHKFYFNNTFQDVFTAAETCSSNEKTNISVELVGRVIRARIHSMTNFYDVKKDNDELQIVYNKNLQGKENPIAIKIVDCIRRGDIIGFKGIVGRTKTGEISVFAHEIQILSPCLRAFPSEKNLITNPELIYRHRHIDLLVNQDSRNRFITRSKIIQHIREYFNKIGFLEVETPIMNNKVGGASARPFLTHHNELKIDLYLRVAPELFLKQLVVGGLERVFEIGKNFRNEGIDLTHNPEFTAIEFYMAYADYNDLMCIVEELLSGLVKLIKGSSKFIYQPCKRETIDEIKVPLDFSTPFKRIDILEELNKSLNIELTGENIEKPETLELLIKKAEELNIIVNNPKTLNRMLDAFIGEYIEPQCINPTFVTGFPICMSPLAKDHRSKAGITERFEMFCNGKELVNAYTELNIPDLQRKRFLMQDADANAGDDEAMPNDEDFCQVLEYGLPPTGGCGIGIDRLVMYLTDAANIRDVILFPTLKPEQK</sequence>
<protein>
    <recommendedName>
        <fullName>Probable lysine--tRNA ligase, cytoplasmic</fullName>
        <ecNumber>6.1.1.6</ecNumber>
    </recommendedName>
    <alternativeName>
        <fullName>Lysyl-tRNA synthetase</fullName>
        <shortName>LysRS</shortName>
    </alternativeName>
</protein>
<comment type="catalytic activity">
    <reaction>
        <text>tRNA(Lys) + L-lysine + ATP = L-lysyl-tRNA(Lys) + AMP + diphosphate</text>
        <dbReference type="Rhea" id="RHEA:20792"/>
        <dbReference type="Rhea" id="RHEA-COMP:9696"/>
        <dbReference type="Rhea" id="RHEA-COMP:9697"/>
        <dbReference type="ChEBI" id="CHEBI:30616"/>
        <dbReference type="ChEBI" id="CHEBI:32551"/>
        <dbReference type="ChEBI" id="CHEBI:33019"/>
        <dbReference type="ChEBI" id="CHEBI:78442"/>
        <dbReference type="ChEBI" id="CHEBI:78529"/>
        <dbReference type="ChEBI" id="CHEBI:456215"/>
        <dbReference type="EC" id="6.1.1.6"/>
    </reaction>
</comment>
<comment type="subunit">
    <text evidence="1">Homodimer.</text>
</comment>
<comment type="subcellular location">
    <subcellularLocation>
        <location evidence="1">Cytoplasm</location>
    </subcellularLocation>
</comment>
<comment type="similarity">
    <text evidence="2">Belongs to the class-II aminoacyl-tRNA synthetase family.</text>
</comment>
<accession>A9CS74</accession>
<keyword id="KW-0030">Aminoacyl-tRNA synthetase</keyword>
<keyword id="KW-0067">ATP-binding</keyword>
<keyword id="KW-0963">Cytoplasm</keyword>
<keyword id="KW-0436">Ligase</keyword>
<keyword id="KW-0547">Nucleotide-binding</keyword>
<keyword id="KW-0648">Protein biosynthesis</keyword>
<organism>
    <name type="scientific">Enterocytozoon bieneusi (strain H348)</name>
    <name type="common">Microsporidian parasite</name>
    <dbReference type="NCBI Taxonomy" id="481877"/>
    <lineage>
        <taxon>Eukaryota</taxon>
        <taxon>Fungi</taxon>
        <taxon>Fungi incertae sedis</taxon>
        <taxon>Microsporidia</taxon>
        <taxon>Enterocytozoonidae</taxon>
        <taxon>Enterocytozoon</taxon>
    </lineage>
</organism>
<reference key="1">
    <citation type="journal article" date="2007" name="PLoS ONE">
        <title>Patterns of genome evolution among the microsporidian parasites Encephalitozoon cuniculi, Antonospora locustae and Enterocytozoon bieneusi.</title>
        <authorList>
            <person name="Corradi N."/>
            <person name="Akiyoshi D.E."/>
            <person name="Morrison H.G."/>
            <person name="Feng X."/>
            <person name="Weiss L.M."/>
            <person name="Tzipori S."/>
            <person name="Keeling P.J."/>
        </authorList>
    </citation>
    <scope>NUCLEOTIDE SEQUENCE [LARGE SCALE GENOMIC DNA]</scope>
    <source>
        <strain>H348</strain>
    </source>
</reference>
<reference key="2">
    <citation type="journal article" date="2009" name="PLoS Pathog.">
        <title>Genomic survey of the non-cultivatable opportunistic human pathogen, Enterocytozoon bieneusi.</title>
        <authorList>
            <person name="Akiyoshi D.E."/>
            <person name="Morrison H.G."/>
            <person name="Lei S."/>
            <person name="Feng X."/>
            <person name="Zhang Q."/>
            <person name="Corradi N."/>
            <person name="Mayanja H."/>
            <person name="Tumwine J.K."/>
            <person name="Keeling P.J."/>
            <person name="Weiss L.M."/>
            <person name="Tzipori S."/>
        </authorList>
    </citation>
    <scope>NUCLEOTIDE SEQUENCE [LARGE SCALE GENOMIC DNA]</scope>
    <source>
        <strain>H348</strain>
    </source>
</reference>